<protein>
    <recommendedName>
        <fullName evidence="2">Probable metallophosphoesterase MTH_1774</fullName>
        <ecNumber evidence="1">3.1.4.-</ecNumber>
    </recommendedName>
</protein>
<name>Y1774_METTH</name>
<evidence type="ECO:0000250" key="1">
    <source>
        <dbReference type="UniProtKB" id="Q58346"/>
    </source>
</evidence>
<evidence type="ECO:0000305" key="2"/>
<dbReference type="EC" id="3.1.4.-" evidence="1"/>
<dbReference type="EMBL" id="AE000666">
    <property type="protein sequence ID" value="AAB86240.1"/>
    <property type="molecule type" value="Genomic_DNA"/>
</dbReference>
<dbReference type="PIR" id="H69103">
    <property type="entry name" value="H69103"/>
</dbReference>
<dbReference type="RefSeq" id="WP_010877376.1">
    <property type="nucleotide sequence ID" value="NC_000916.1"/>
</dbReference>
<dbReference type="SMR" id="O27802"/>
<dbReference type="FunCoup" id="O27802">
    <property type="interactions" value="103"/>
</dbReference>
<dbReference type="STRING" id="187420.MTH_1774"/>
<dbReference type="PaxDb" id="187420-MTH_1774"/>
<dbReference type="EnsemblBacteria" id="AAB86240">
    <property type="protein sequence ID" value="AAB86240"/>
    <property type="gene ID" value="MTH_1774"/>
</dbReference>
<dbReference type="GeneID" id="1470859"/>
<dbReference type="KEGG" id="mth:MTH_1774"/>
<dbReference type="PATRIC" id="fig|187420.15.peg.1729"/>
<dbReference type="HOGENOM" id="CLU_063749_3_2_2"/>
<dbReference type="InParanoid" id="O27802"/>
<dbReference type="Proteomes" id="UP000005223">
    <property type="component" value="Chromosome"/>
</dbReference>
<dbReference type="GO" id="GO:0016787">
    <property type="term" value="F:hydrolase activity"/>
    <property type="evidence" value="ECO:0007669"/>
    <property type="project" value="UniProtKB-KW"/>
</dbReference>
<dbReference type="GO" id="GO:0046872">
    <property type="term" value="F:metal ion binding"/>
    <property type="evidence" value="ECO:0007669"/>
    <property type="project" value="UniProtKB-KW"/>
</dbReference>
<dbReference type="CDD" id="cd00841">
    <property type="entry name" value="MPP_YfcE"/>
    <property type="match status" value="1"/>
</dbReference>
<dbReference type="Gene3D" id="3.60.21.10">
    <property type="match status" value="1"/>
</dbReference>
<dbReference type="InterPro" id="IPR024654">
    <property type="entry name" value="Calcineurin-like_PHP_lpxH"/>
</dbReference>
<dbReference type="InterPro" id="IPR029052">
    <property type="entry name" value="Metallo-depent_PP-like"/>
</dbReference>
<dbReference type="InterPro" id="IPR041802">
    <property type="entry name" value="MPP_YfcE"/>
</dbReference>
<dbReference type="InterPro" id="IPR020935">
    <property type="entry name" value="PdiEstase_YfcE_CS"/>
</dbReference>
<dbReference type="InterPro" id="IPR000979">
    <property type="entry name" value="Phosphodiesterase_MJ0936/Vps29"/>
</dbReference>
<dbReference type="NCBIfam" id="TIGR00040">
    <property type="entry name" value="yfcE"/>
    <property type="match status" value="1"/>
</dbReference>
<dbReference type="PANTHER" id="PTHR11124">
    <property type="entry name" value="VACUOLAR SORTING PROTEIN VPS29"/>
    <property type="match status" value="1"/>
</dbReference>
<dbReference type="Pfam" id="PF12850">
    <property type="entry name" value="Metallophos_2"/>
    <property type="match status" value="1"/>
</dbReference>
<dbReference type="SUPFAM" id="SSF56300">
    <property type="entry name" value="Metallo-dependent phosphatases"/>
    <property type="match status" value="1"/>
</dbReference>
<dbReference type="PROSITE" id="PS01269">
    <property type="entry name" value="UPF0025"/>
    <property type="match status" value="1"/>
</dbReference>
<sequence>MLIGVISDTHIPDRASEIPEAVFDAFRDVELILHAGDLTSPDILTELETLAPVECVQGNMDRHYGIETPRSRLFEIESFRVGLIHGEVYPRGDTQQLRYLGLELGADVLISGHTHQPFIRELEDMVLLNPGSPTVPRLTDPSVMVLRIDGEKLDAEIIRTGAPVCRSLNFRR</sequence>
<feature type="chain" id="PRO_0000155613" description="Probable metallophosphoesterase MTH_1774">
    <location>
        <begin position="1"/>
        <end position="172"/>
    </location>
</feature>
<feature type="binding site" evidence="1">
    <location>
        <position position="8"/>
    </location>
    <ligand>
        <name>a divalent metal cation</name>
        <dbReference type="ChEBI" id="CHEBI:60240"/>
        <label>1</label>
    </ligand>
</feature>
<feature type="binding site" evidence="1">
    <location>
        <position position="10"/>
    </location>
    <ligand>
        <name>a divalent metal cation</name>
        <dbReference type="ChEBI" id="CHEBI:60240"/>
        <label>1</label>
    </ligand>
</feature>
<feature type="binding site" evidence="1">
    <location>
        <position position="37"/>
    </location>
    <ligand>
        <name>a divalent metal cation</name>
        <dbReference type="ChEBI" id="CHEBI:60240"/>
        <label>1</label>
    </ligand>
</feature>
<feature type="binding site" evidence="1">
    <location>
        <position position="37"/>
    </location>
    <ligand>
        <name>a divalent metal cation</name>
        <dbReference type="ChEBI" id="CHEBI:60240"/>
        <label>2</label>
    </ligand>
</feature>
<feature type="binding site" evidence="1">
    <location>
        <position position="59"/>
    </location>
    <ligand>
        <name>a divalent metal cation</name>
        <dbReference type="ChEBI" id="CHEBI:60240"/>
        <label>2</label>
    </ligand>
</feature>
<feature type="binding site" evidence="1">
    <location>
        <position position="85"/>
    </location>
    <ligand>
        <name>a divalent metal cation</name>
        <dbReference type="ChEBI" id="CHEBI:60240"/>
        <label>2</label>
    </ligand>
</feature>
<feature type="binding site" evidence="1">
    <location>
        <position position="113"/>
    </location>
    <ligand>
        <name>a divalent metal cation</name>
        <dbReference type="ChEBI" id="CHEBI:60240"/>
        <label>2</label>
    </ligand>
</feature>
<feature type="binding site" evidence="1">
    <location>
        <position position="115"/>
    </location>
    <ligand>
        <name>a divalent metal cation</name>
        <dbReference type="ChEBI" id="CHEBI:60240"/>
        <label>1</label>
    </ligand>
</feature>
<accession>O27802</accession>
<reference key="1">
    <citation type="journal article" date="1997" name="J. Bacteriol.">
        <title>Complete genome sequence of Methanobacterium thermoautotrophicum deltaH: functional analysis and comparative genomics.</title>
        <authorList>
            <person name="Smith D.R."/>
            <person name="Doucette-Stamm L.A."/>
            <person name="Deloughery C."/>
            <person name="Lee H.-M."/>
            <person name="Dubois J."/>
            <person name="Aldredge T."/>
            <person name="Bashirzadeh R."/>
            <person name="Blakely D."/>
            <person name="Cook R."/>
            <person name="Gilbert K."/>
            <person name="Harrison D."/>
            <person name="Hoang L."/>
            <person name="Keagle P."/>
            <person name="Lumm W."/>
            <person name="Pothier B."/>
            <person name="Qiu D."/>
            <person name="Spadafora R."/>
            <person name="Vicare R."/>
            <person name="Wang Y."/>
            <person name="Wierzbowski J."/>
            <person name="Gibson R."/>
            <person name="Jiwani N."/>
            <person name="Caruso A."/>
            <person name="Bush D."/>
            <person name="Safer H."/>
            <person name="Patwell D."/>
            <person name="Prabhakar S."/>
            <person name="McDougall S."/>
            <person name="Shimer G."/>
            <person name="Goyal A."/>
            <person name="Pietrovski S."/>
            <person name="Church G.M."/>
            <person name="Daniels C.J."/>
            <person name="Mao J.-I."/>
            <person name="Rice P."/>
            <person name="Noelling J."/>
            <person name="Reeve J.N."/>
        </authorList>
    </citation>
    <scope>NUCLEOTIDE SEQUENCE [LARGE SCALE GENOMIC DNA]</scope>
    <source>
        <strain>ATCC 29096 / DSM 1053 / JCM 10044 / NBRC 100330 / Delta H</strain>
    </source>
</reference>
<keyword id="KW-0378">Hydrolase</keyword>
<keyword id="KW-0479">Metal-binding</keyword>
<keyword id="KW-1185">Reference proteome</keyword>
<organism>
    <name type="scientific">Methanothermobacter thermautotrophicus (strain ATCC 29096 / DSM 1053 / JCM 10044 / NBRC 100330 / Delta H)</name>
    <name type="common">Methanobacterium thermoautotrophicum</name>
    <dbReference type="NCBI Taxonomy" id="187420"/>
    <lineage>
        <taxon>Archaea</taxon>
        <taxon>Methanobacteriati</taxon>
        <taxon>Methanobacteriota</taxon>
        <taxon>Methanomada group</taxon>
        <taxon>Methanobacteria</taxon>
        <taxon>Methanobacteriales</taxon>
        <taxon>Methanobacteriaceae</taxon>
        <taxon>Methanothermobacter</taxon>
    </lineage>
</organism>
<gene>
    <name type="ordered locus">MTH_1774</name>
</gene>
<proteinExistence type="inferred from homology"/>
<comment type="cofactor">
    <cofactor evidence="1">
        <name>a divalent metal cation</name>
        <dbReference type="ChEBI" id="CHEBI:60240"/>
    </cofactor>
    <text evidence="1">Binds 2 divalent metal ions per subunit.</text>
</comment>
<comment type="similarity">
    <text evidence="2">Belongs to the metallophosphoesterase superfamily. YfcE family.</text>
</comment>